<comment type="function">
    <text evidence="1">Converts seryl-tRNA(Sec) to selenocysteinyl-tRNA(Sec) required for selenoprotein biosynthesis.</text>
</comment>
<comment type="catalytic activity">
    <reaction evidence="1">
        <text>L-seryl-tRNA(Sec) + selenophosphate + H(+) = L-selenocysteinyl-tRNA(Sec) + phosphate</text>
        <dbReference type="Rhea" id="RHEA:22728"/>
        <dbReference type="Rhea" id="RHEA-COMP:9742"/>
        <dbReference type="Rhea" id="RHEA-COMP:9743"/>
        <dbReference type="ChEBI" id="CHEBI:15378"/>
        <dbReference type="ChEBI" id="CHEBI:16144"/>
        <dbReference type="ChEBI" id="CHEBI:43474"/>
        <dbReference type="ChEBI" id="CHEBI:78533"/>
        <dbReference type="ChEBI" id="CHEBI:78573"/>
        <dbReference type="EC" id="2.9.1.1"/>
    </reaction>
</comment>
<comment type="cofactor">
    <cofactor evidence="1">
        <name>pyridoxal 5'-phosphate</name>
        <dbReference type="ChEBI" id="CHEBI:597326"/>
    </cofactor>
</comment>
<comment type="pathway">
    <text evidence="1">Aminoacyl-tRNA biosynthesis; selenocysteinyl-tRNA(Sec) biosynthesis; selenocysteinyl-tRNA(Sec) from L-seryl-tRNA(Sec) (bacterial route): step 1/1.</text>
</comment>
<comment type="subcellular location">
    <subcellularLocation>
        <location evidence="1">Cytoplasm</location>
    </subcellularLocation>
</comment>
<comment type="similarity">
    <text evidence="1">Belongs to the SelA family.</text>
</comment>
<keyword id="KW-0963">Cytoplasm</keyword>
<keyword id="KW-0648">Protein biosynthesis</keyword>
<keyword id="KW-0663">Pyridoxal phosphate</keyword>
<keyword id="KW-1185">Reference proteome</keyword>
<keyword id="KW-0711">Selenium</keyword>
<keyword id="KW-0808">Transferase</keyword>
<dbReference type="EC" id="2.9.1.1" evidence="1"/>
<dbReference type="EMBL" id="AE008691">
    <property type="protein sequence ID" value="AAM25059.1"/>
    <property type="molecule type" value="Genomic_DNA"/>
</dbReference>
<dbReference type="RefSeq" id="WP_011026039.1">
    <property type="nucleotide sequence ID" value="NC_003869.1"/>
</dbReference>
<dbReference type="SMR" id="Q8R8W4"/>
<dbReference type="STRING" id="273068.TTE1872"/>
<dbReference type="KEGG" id="tte:TTE1872"/>
<dbReference type="eggNOG" id="COG1921">
    <property type="taxonomic scope" value="Bacteria"/>
</dbReference>
<dbReference type="HOGENOM" id="CLU_038142_1_0_9"/>
<dbReference type="OrthoDB" id="9787096at2"/>
<dbReference type="UniPathway" id="UPA00906">
    <property type="reaction ID" value="UER00896"/>
</dbReference>
<dbReference type="Proteomes" id="UP000000555">
    <property type="component" value="Chromosome"/>
</dbReference>
<dbReference type="GO" id="GO:0005737">
    <property type="term" value="C:cytoplasm"/>
    <property type="evidence" value="ECO:0007669"/>
    <property type="project" value="UniProtKB-SubCell"/>
</dbReference>
<dbReference type="GO" id="GO:0004125">
    <property type="term" value="F:L-seryl-tRNA(Sec) selenium transferase activity"/>
    <property type="evidence" value="ECO:0007669"/>
    <property type="project" value="UniProtKB-UniRule"/>
</dbReference>
<dbReference type="GO" id="GO:0001717">
    <property type="term" value="P:conversion of seryl-tRNAsec to selenocys-tRNAsec"/>
    <property type="evidence" value="ECO:0007669"/>
    <property type="project" value="UniProtKB-UniRule"/>
</dbReference>
<dbReference type="GO" id="GO:0001514">
    <property type="term" value="P:selenocysteine incorporation"/>
    <property type="evidence" value="ECO:0007669"/>
    <property type="project" value="UniProtKB-UniRule"/>
</dbReference>
<dbReference type="Gene3D" id="3.90.1150.180">
    <property type="match status" value="1"/>
</dbReference>
<dbReference type="Gene3D" id="3.40.640.10">
    <property type="entry name" value="Type I PLP-dependent aspartate aminotransferase-like (Major domain)"/>
    <property type="match status" value="1"/>
</dbReference>
<dbReference type="HAMAP" id="MF_00423">
    <property type="entry name" value="SelA"/>
    <property type="match status" value="1"/>
</dbReference>
<dbReference type="InterPro" id="IPR015424">
    <property type="entry name" value="PyrdxlP-dep_Trfase"/>
</dbReference>
<dbReference type="InterPro" id="IPR015421">
    <property type="entry name" value="PyrdxlP-dep_Trfase_major"/>
</dbReference>
<dbReference type="InterPro" id="IPR018319">
    <property type="entry name" value="SelA-like"/>
</dbReference>
<dbReference type="InterPro" id="IPR004534">
    <property type="entry name" value="SelA_trans"/>
</dbReference>
<dbReference type="InterPro" id="IPR025862">
    <property type="entry name" value="SelA_trans_N_dom"/>
</dbReference>
<dbReference type="NCBIfam" id="TIGR00474">
    <property type="entry name" value="selA"/>
    <property type="match status" value="1"/>
</dbReference>
<dbReference type="PANTHER" id="PTHR32328">
    <property type="entry name" value="L-SERYL-TRNA(SEC) SELENIUM TRANSFERASE"/>
    <property type="match status" value="1"/>
</dbReference>
<dbReference type="PANTHER" id="PTHR32328:SF0">
    <property type="entry name" value="L-SERYL-TRNA(SEC) SELENIUM TRANSFERASE"/>
    <property type="match status" value="1"/>
</dbReference>
<dbReference type="Pfam" id="PF12390">
    <property type="entry name" value="Se-cys_synth_N"/>
    <property type="match status" value="1"/>
</dbReference>
<dbReference type="Pfam" id="PF03841">
    <property type="entry name" value="SelA"/>
    <property type="match status" value="1"/>
</dbReference>
<dbReference type="SUPFAM" id="SSF53383">
    <property type="entry name" value="PLP-dependent transferases"/>
    <property type="match status" value="1"/>
</dbReference>
<organism>
    <name type="scientific">Caldanaerobacter subterraneus subsp. tengcongensis (strain DSM 15242 / JCM 11007 / NBRC 100824 / MB4)</name>
    <name type="common">Thermoanaerobacter tengcongensis</name>
    <dbReference type="NCBI Taxonomy" id="273068"/>
    <lineage>
        <taxon>Bacteria</taxon>
        <taxon>Bacillati</taxon>
        <taxon>Bacillota</taxon>
        <taxon>Clostridia</taxon>
        <taxon>Thermoanaerobacterales</taxon>
        <taxon>Thermoanaerobacteraceae</taxon>
        <taxon>Caldanaerobacter</taxon>
    </lineage>
</organism>
<gene>
    <name evidence="1" type="primary">selA</name>
    <name type="ordered locus">TTE1872</name>
</gene>
<reference key="1">
    <citation type="journal article" date="2002" name="Genome Res.">
        <title>A complete sequence of the T. tengcongensis genome.</title>
        <authorList>
            <person name="Bao Q."/>
            <person name="Tian Y."/>
            <person name="Li W."/>
            <person name="Xu Z."/>
            <person name="Xuan Z."/>
            <person name="Hu S."/>
            <person name="Dong W."/>
            <person name="Yang J."/>
            <person name="Chen Y."/>
            <person name="Xue Y."/>
            <person name="Xu Y."/>
            <person name="Lai X."/>
            <person name="Huang L."/>
            <person name="Dong X."/>
            <person name="Ma Y."/>
            <person name="Ling L."/>
            <person name="Tan H."/>
            <person name="Chen R."/>
            <person name="Wang J."/>
            <person name="Yu J."/>
            <person name="Yang H."/>
        </authorList>
    </citation>
    <scope>NUCLEOTIDE SEQUENCE [LARGE SCALE GENOMIC DNA]</scope>
    <source>
        <strain>DSM 15242 / JCM 11007 / NBRC 100824 / MB4</strain>
    </source>
</reference>
<accession>Q8R8W4</accession>
<protein>
    <recommendedName>
        <fullName evidence="1">L-seryl-tRNA(Sec) selenium transferase</fullName>
        <ecNumber evidence="1">2.9.1.1</ecNumber>
    </recommendedName>
    <alternativeName>
        <fullName evidence="1">Selenocysteine synthase</fullName>
        <shortName evidence="1">Sec synthase</shortName>
    </alternativeName>
    <alternativeName>
        <fullName evidence="1">Selenocysteinyl-tRNA(Sec) synthase</fullName>
    </alternativeName>
</protein>
<feature type="chain" id="PRO_0000189619" description="L-seryl-tRNA(Sec) selenium transferase">
    <location>
        <begin position="1"/>
        <end position="461"/>
    </location>
</feature>
<feature type="modified residue" description="N6-(pyridoxal phosphate)lysine" evidence="1">
    <location>
        <position position="291"/>
    </location>
</feature>
<name>SELA_CALS4</name>
<proteinExistence type="inferred from homology"/>
<evidence type="ECO:0000255" key="1">
    <source>
        <dbReference type="HAMAP-Rule" id="MF_00423"/>
    </source>
</evidence>
<sequence length="461" mass="51668">MEDLYRKLPSVDEILREEKINEVLKFNKREVVKNCIREVLERYREKIRRGEVKKIDIEKILEDVVSQIEEKKKMSLRRVVNGTGIILHTNLGRALFPPQVKEHLLDIAFCYSTLEYDVEKGERGSRYSHVEKLLCELLDVEAALVVNNNAAAVLLALNTLAKGKEVIVSRGQLIEIGGSFRIPDVMLQSGAILKEVGTTNKTYDFDYINAITENTALLLKVHTSNYRIVGFTHDIATEELVQIGRKYDIPTMEDLGSGVMVDLREYGLPHEPTVQEVVKAGVDIVTFSGDKLLGGPQAGIIVGKKKYIDLMKKNPLTRALRVDKLCLVSLECVLRIYRDSNPVEAIPTLKMLTAKPSQLYEKAAILNKLVLTIPKVKSKVVEITSLSGGGSLPEESLPSYGITLEVEGFDTEDLERRLRIRDIPIITRIVDGVVTIDVRTLLEGDEEVILHALEEITGVCQ</sequence>